<accession>B5FRD8</accession>
<keyword id="KW-0556">Organic radical</keyword>
<proteinExistence type="inferred from homology"/>
<comment type="function">
    <text evidence="1">Acts as a radical domain for damaged PFL and possibly other radical proteins.</text>
</comment>
<protein>
    <recommendedName>
        <fullName evidence="1">Autonomous glycyl radical cofactor</fullName>
    </recommendedName>
</protein>
<dbReference type="EMBL" id="CP001144">
    <property type="protein sequence ID" value="ACH76503.1"/>
    <property type="molecule type" value="Genomic_DNA"/>
</dbReference>
<dbReference type="RefSeq" id="WP_000627809.1">
    <property type="nucleotide sequence ID" value="NC_011205.1"/>
</dbReference>
<dbReference type="SMR" id="B5FRD8"/>
<dbReference type="KEGG" id="sed:SeD_A2974"/>
<dbReference type="HOGENOM" id="CLU_133780_0_0_6"/>
<dbReference type="Proteomes" id="UP000008322">
    <property type="component" value="Chromosome"/>
</dbReference>
<dbReference type="GO" id="GO:0005829">
    <property type="term" value="C:cytosol"/>
    <property type="evidence" value="ECO:0007669"/>
    <property type="project" value="TreeGrafter"/>
</dbReference>
<dbReference type="GO" id="GO:0008861">
    <property type="term" value="F:formate C-acetyltransferase activity"/>
    <property type="evidence" value="ECO:0007669"/>
    <property type="project" value="TreeGrafter"/>
</dbReference>
<dbReference type="FunFam" id="3.20.70.20:FF:000002">
    <property type="entry name" value="Autonomous glycyl radical cofactor"/>
    <property type="match status" value="1"/>
</dbReference>
<dbReference type="Gene3D" id="3.20.70.20">
    <property type="match status" value="1"/>
</dbReference>
<dbReference type="HAMAP" id="MF_00806">
    <property type="entry name" value="GrcA"/>
    <property type="match status" value="1"/>
</dbReference>
<dbReference type="InterPro" id="IPR050244">
    <property type="entry name" value="Auton_GlycylRad_Cofactor"/>
</dbReference>
<dbReference type="InterPro" id="IPR019777">
    <property type="entry name" value="Form_AcTrfase_GR_CS"/>
</dbReference>
<dbReference type="InterPro" id="IPR001150">
    <property type="entry name" value="Gly_radical"/>
</dbReference>
<dbReference type="InterPro" id="IPR011140">
    <property type="entry name" value="Glycyl_radical_cofactor_GrcA"/>
</dbReference>
<dbReference type="NCBIfam" id="TIGR04365">
    <property type="entry name" value="spare_glycyl"/>
    <property type="match status" value="1"/>
</dbReference>
<dbReference type="PANTHER" id="PTHR30191">
    <property type="entry name" value="FORMATE ACETYLTRANSFERASE"/>
    <property type="match status" value="1"/>
</dbReference>
<dbReference type="PANTHER" id="PTHR30191:SF0">
    <property type="entry name" value="FORMATE ACETYLTRANSFERASE 1"/>
    <property type="match status" value="1"/>
</dbReference>
<dbReference type="Pfam" id="PF01228">
    <property type="entry name" value="Gly_radical"/>
    <property type="match status" value="1"/>
</dbReference>
<dbReference type="PIRSF" id="PIRSF000378">
    <property type="entry name" value="Gly_radicl_yfiD"/>
    <property type="match status" value="1"/>
</dbReference>
<dbReference type="SUPFAM" id="SSF51998">
    <property type="entry name" value="PFL-like glycyl radical enzymes"/>
    <property type="match status" value="1"/>
</dbReference>
<dbReference type="PROSITE" id="PS00850">
    <property type="entry name" value="GLY_RADICAL_1"/>
    <property type="match status" value="1"/>
</dbReference>
<dbReference type="PROSITE" id="PS51149">
    <property type="entry name" value="GLY_RADICAL_2"/>
    <property type="match status" value="1"/>
</dbReference>
<evidence type="ECO:0000255" key="1">
    <source>
        <dbReference type="HAMAP-Rule" id="MF_00806"/>
    </source>
</evidence>
<sequence length="127" mass="14354">MITGIQITKAANDDLLNSFWLLDSEKGEARCIVAKPGFAEDEVVAVSKLGEIEYREIPMEVKPEVRVEGGQHLNVNVLRRETLEDAVKHPEKYPQLTIRVSGYAVRFNSLTPEQQRDVIARTFTESL</sequence>
<feature type="chain" id="PRO_1000133994" description="Autonomous glycyl radical cofactor">
    <location>
        <begin position="1"/>
        <end position="127"/>
    </location>
</feature>
<feature type="domain" description="Glycine radical" evidence="1">
    <location>
        <begin position="5"/>
        <end position="127"/>
    </location>
</feature>
<feature type="modified residue" description="Glycine radical" evidence="1">
    <location>
        <position position="102"/>
    </location>
</feature>
<organism>
    <name type="scientific">Salmonella dublin (strain CT_02021853)</name>
    <dbReference type="NCBI Taxonomy" id="439851"/>
    <lineage>
        <taxon>Bacteria</taxon>
        <taxon>Pseudomonadati</taxon>
        <taxon>Pseudomonadota</taxon>
        <taxon>Gammaproteobacteria</taxon>
        <taxon>Enterobacterales</taxon>
        <taxon>Enterobacteriaceae</taxon>
        <taxon>Salmonella</taxon>
    </lineage>
</organism>
<name>GRCA_SALDC</name>
<reference key="1">
    <citation type="journal article" date="2011" name="J. Bacteriol.">
        <title>Comparative genomics of 28 Salmonella enterica isolates: evidence for CRISPR-mediated adaptive sublineage evolution.</title>
        <authorList>
            <person name="Fricke W.F."/>
            <person name="Mammel M.K."/>
            <person name="McDermott P.F."/>
            <person name="Tartera C."/>
            <person name="White D.G."/>
            <person name="Leclerc J.E."/>
            <person name="Ravel J."/>
            <person name="Cebula T.A."/>
        </authorList>
    </citation>
    <scope>NUCLEOTIDE SEQUENCE [LARGE SCALE GENOMIC DNA]</scope>
    <source>
        <strain>CT_02021853</strain>
    </source>
</reference>
<gene>
    <name evidence="1" type="primary">grcA</name>
    <name type="ordered locus">SeD_A2974</name>
</gene>